<comment type="function">
    <text evidence="1">The ModE-Mo complex acts as a repressor of the modABC operon, involved in the transport of molybdate. Upon binding molybdate, the conformation of the protein changes, promoting dimerization of ModE-Mo. The protein dimer is then competent to bind a DNA region, upstream of the modABC operon. Also acts as an enhancer of the expression of genes coding for molybdoenzymes, both directly and indirectly (By similarity).</text>
</comment>
<comment type="subunit">
    <text evidence="1">Homodimer.</text>
</comment>
<comment type="subcellular location">
    <subcellularLocation>
        <location evidence="3">Cytoplasm</location>
    </subcellularLocation>
</comment>
<comment type="similarity">
    <text evidence="3">Belongs to the ModE family.</text>
</comment>
<evidence type="ECO:0000250" key="1"/>
<evidence type="ECO:0000255" key="2">
    <source>
        <dbReference type="PROSITE-ProRule" id="PRU01213"/>
    </source>
</evidence>
<evidence type="ECO:0000305" key="3"/>
<keyword id="KW-0010">Activator</keyword>
<keyword id="KW-0963">Cytoplasm</keyword>
<keyword id="KW-0238">DNA-binding</keyword>
<keyword id="KW-0500">Molybdenum</keyword>
<keyword id="KW-1185">Reference proteome</keyword>
<keyword id="KW-0677">Repeat</keyword>
<keyword id="KW-0678">Repressor</keyword>
<keyword id="KW-0804">Transcription</keyword>
<keyword id="KW-0805">Transcription regulation</keyword>
<keyword id="KW-0813">Transport</keyword>
<feature type="chain" id="PRO_0000201126" description="Transcriptional regulator ModE">
    <location>
        <begin position="1"/>
        <end position="262"/>
    </location>
</feature>
<feature type="domain" description="Mop 1" evidence="2">
    <location>
        <begin position="124"/>
        <end position="191"/>
    </location>
</feature>
<feature type="domain" description="Mop 2" evidence="2">
    <location>
        <begin position="196"/>
        <end position="260"/>
    </location>
</feature>
<feature type="DNA-binding region" description="H-T-H motif" evidence="1">
    <location>
        <begin position="33"/>
        <end position="79"/>
    </location>
</feature>
<feature type="region of interest" description="I">
    <location>
        <begin position="1"/>
        <end position="121"/>
    </location>
</feature>
<feature type="region of interest" description="Required for dimer formation and molybdate binding" evidence="1">
    <location>
        <begin position="125"/>
        <end position="133"/>
    </location>
</feature>
<proteinExistence type="inferred from homology"/>
<organism>
    <name type="scientific">Escherichia coli O157:H7</name>
    <dbReference type="NCBI Taxonomy" id="83334"/>
    <lineage>
        <taxon>Bacteria</taxon>
        <taxon>Pseudomonadati</taxon>
        <taxon>Pseudomonadota</taxon>
        <taxon>Gammaproteobacteria</taxon>
        <taxon>Enterobacterales</taxon>
        <taxon>Enterobacteriaceae</taxon>
        <taxon>Escherichia</taxon>
    </lineage>
</organism>
<gene>
    <name type="primary">modE</name>
    <name type="ordered locus">Z0931</name>
    <name type="ordered locus">ECs0789</name>
</gene>
<protein>
    <recommendedName>
        <fullName>Transcriptional regulator ModE</fullName>
    </recommendedName>
</protein>
<accession>P0A9G9</accession>
<accession>P46930</accession>
<reference key="1">
    <citation type="journal article" date="2001" name="Nature">
        <title>Genome sequence of enterohaemorrhagic Escherichia coli O157:H7.</title>
        <authorList>
            <person name="Perna N.T."/>
            <person name="Plunkett G. III"/>
            <person name="Burland V."/>
            <person name="Mau B."/>
            <person name="Glasner J.D."/>
            <person name="Rose D.J."/>
            <person name="Mayhew G.F."/>
            <person name="Evans P.S."/>
            <person name="Gregor J."/>
            <person name="Kirkpatrick H.A."/>
            <person name="Posfai G."/>
            <person name="Hackett J."/>
            <person name="Klink S."/>
            <person name="Boutin A."/>
            <person name="Shao Y."/>
            <person name="Miller L."/>
            <person name="Grotbeck E.J."/>
            <person name="Davis N.W."/>
            <person name="Lim A."/>
            <person name="Dimalanta E.T."/>
            <person name="Potamousis K."/>
            <person name="Apodaca J."/>
            <person name="Anantharaman T.S."/>
            <person name="Lin J."/>
            <person name="Yen G."/>
            <person name="Schwartz D.C."/>
            <person name="Welch R.A."/>
            <person name="Blattner F.R."/>
        </authorList>
    </citation>
    <scope>NUCLEOTIDE SEQUENCE [LARGE SCALE GENOMIC DNA]</scope>
    <source>
        <strain>O157:H7 / EDL933 / ATCC 700927 / EHEC</strain>
    </source>
</reference>
<reference key="2">
    <citation type="journal article" date="2001" name="DNA Res.">
        <title>Complete genome sequence of enterohemorrhagic Escherichia coli O157:H7 and genomic comparison with a laboratory strain K-12.</title>
        <authorList>
            <person name="Hayashi T."/>
            <person name="Makino K."/>
            <person name="Ohnishi M."/>
            <person name="Kurokawa K."/>
            <person name="Ishii K."/>
            <person name="Yokoyama K."/>
            <person name="Han C.-G."/>
            <person name="Ohtsubo E."/>
            <person name="Nakayama K."/>
            <person name="Murata T."/>
            <person name="Tanaka M."/>
            <person name="Tobe T."/>
            <person name="Iida T."/>
            <person name="Takami H."/>
            <person name="Honda T."/>
            <person name="Sasakawa C."/>
            <person name="Ogasawara N."/>
            <person name="Yasunaga T."/>
            <person name="Kuhara S."/>
            <person name="Shiba T."/>
            <person name="Hattori M."/>
            <person name="Shinagawa H."/>
        </authorList>
    </citation>
    <scope>NUCLEOTIDE SEQUENCE [LARGE SCALE GENOMIC DNA]</scope>
    <source>
        <strain>O157:H7 / Sakai / RIMD 0509952 / EHEC</strain>
    </source>
</reference>
<sequence>MQAEILLTLKLQQKLFADPRRISLLKHIALSGSISQGAKDAGISYKSAWDAINEMNQLSEHILVERATGGKGGGGAVLTRYGQRLIQLYDLLAQIQQKAFDVLSDDDALPLNSLLAAISRFSLQTSARNQWFGTITARDHDDVQQHVDVLLADGKTRLKVAITAQSGARLGLDEGKEVLILLKAPWVGITQDEAVAQNADNQLPGIISHIERGAEQCEVLMALPDGQTLCATVPVNEATSLQQGQNVTAYFNADSVIIATLC</sequence>
<dbReference type="EMBL" id="AE005174">
    <property type="protein sequence ID" value="AAG55090.1"/>
    <property type="molecule type" value="Genomic_DNA"/>
</dbReference>
<dbReference type="EMBL" id="BA000007">
    <property type="protein sequence ID" value="BAB34212.1"/>
    <property type="molecule type" value="Genomic_DNA"/>
</dbReference>
<dbReference type="PIR" id="E90727">
    <property type="entry name" value="E90727"/>
</dbReference>
<dbReference type="PIR" id="F85578">
    <property type="entry name" value="F85578"/>
</dbReference>
<dbReference type="RefSeq" id="NP_308816.1">
    <property type="nucleotide sequence ID" value="NC_002695.1"/>
</dbReference>
<dbReference type="RefSeq" id="WP_001147439.1">
    <property type="nucleotide sequence ID" value="NZ_VOAI01000019.1"/>
</dbReference>
<dbReference type="SMR" id="P0A9G9"/>
<dbReference type="STRING" id="155864.Z0931"/>
<dbReference type="GeneID" id="75170760"/>
<dbReference type="GeneID" id="917526"/>
<dbReference type="KEGG" id="ece:Z0931"/>
<dbReference type="KEGG" id="ecs:ECs_0789"/>
<dbReference type="PATRIC" id="fig|386585.9.peg.909"/>
<dbReference type="eggNOG" id="COG2005">
    <property type="taxonomic scope" value="Bacteria"/>
</dbReference>
<dbReference type="eggNOG" id="COG3585">
    <property type="taxonomic scope" value="Bacteria"/>
</dbReference>
<dbReference type="HOGENOM" id="CLU_087839_0_0_6"/>
<dbReference type="OMA" id="SYKTAWH"/>
<dbReference type="Proteomes" id="UP000000558">
    <property type="component" value="Chromosome"/>
</dbReference>
<dbReference type="Proteomes" id="UP000002519">
    <property type="component" value="Chromosome"/>
</dbReference>
<dbReference type="GO" id="GO:0005737">
    <property type="term" value="C:cytoplasm"/>
    <property type="evidence" value="ECO:0007669"/>
    <property type="project" value="UniProtKB-SubCell"/>
</dbReference>
<dbReference type="GO" id="GO:0003677">
    <property type="term" value="F:DNA binding"/>
    <property type="evidence" value="ECO:0007669"/>
    <property type="project" value="UniProtKB-KW"/>
</dbReference>
<dbReference type="GO" id="GO:0030151">
    <property type="term" value="F:molybdenum ion binding"/>
    <property type="evidence" value="ECO:0007669"/>
    <property type="project" value="InterPro"/>
</dbReference>
<dbReference type="GO" id="GO:0015689">
    <property type="term" value="P:molybdate ion transport"/>
    <property type="evidence" value="ECO:0007669"/>
    <property type="project" value="InterPro"/>
</dbReference>
<dbReference type="GO" id="GO:0006355">
    <property type="term" value="P:regulation of DNA-templated transcription"/>
    <property type="evidence" value="ECO:0007669"/>
    <property type="project" value="InterPro"/>
</dbReference>
<dbReference type="FunFam" id="1.10.10.10:FF:000154">
    <property type="entry name" value="DNA-binding transcriptional regulator ModE"/>
    <property type="match status" value="1"/>
</dbReference>
<dbReference type="FunFam" id="2.40.50.100:FF:000021">
    <property type="entry name" value="DNA-binding transcriptional regulator ModE"/>
    <property type="match status" value="1"/>
</dbReference>
<dbReference type="Gene3D" id="2.40.50.100">
    <property type="match status" value="2"/>
</dbReference>
<dbReference type="Gene3D" id="1.10.10.10">
    <property type="entry name" value="Winged helix-like DNA-binding domain superfamily/Winged helix DNA-binding domain"/>
    <property type="match status" value="1"/>
</dbReference>
<dbReference type="InterPro" id="IPR008995">
    <property type="entry name" value="Mo/tungstate-bd_C_term_dom"/>
</dbReference>
<dbReference type="InterPro" id="IPR016462">
    <property type="entry name" value="ModE"/>
</dbReference>
<dbReference type="InterPro" id="IPR003725">
    <property type="entry name" value="ModE-bd_N"/>
</dbReference>
<dbReference type="InterPro" id="IPR051815">
    <property type="entry name" value="Molybdate_resp_trans_reg"/>
</dbReference>
<dbReference type="InterPro" id="IPR004606">
    <property type="entry name" value="Mop_domain"/>
</dbReference>
<dbReference type="InterPro" id="IPR005116">
    <property type="entry name" value="Transp-assoc_OB_typ1"/>
</dbReference>
<dbReference type="InterPro" id="IPR036388">
    <property type="entry name" value="WH-like_DNA-bd_sf"/>
</dbReference>
<dbReference type="InterPro" id="IPR036390">
    <property type="entry name" value="WH_DNA-bd_sf"/>
</dbReference>
<dbReference type="NCBIfam" id="TIGR00637">
    <property type="entry name" value="ModE_repress"/>
    <property type="match status" value="1"/>
</dbReference>
<dbReference type="NCBIfam" id="TIGR00638">
    <property type="entry name" value="Mop"/>
    <property type="match status" value="1"/>
</dbReference>
<dbReference type="NCBIfam" id="NF007957">
    <property type="entry name" value="PRK10676.1"/>
    <property type="match status" value="1"/>
</dbReference>
<dbReference type="PANTHER" id="PTHR30432:SF1">
    <property type="entry name" value="DNA-BINDING TRANSCRIPTIONAL DUAL REGULATOR MODE"/>
    <property type="match status" value="1"/>
</dbReference>
<dbReference type="PANTHER" id="PTHR30432">
    <property type="entry name" value="TRANSCRIPTIONAL REGULATOR MODE"/>
    <property type="match status" value="1"/>
</dbReference>
<dbReference type="Pfam" id="PF03459">
    <property type="entry name" value="TOBE"/>
    <property type="match status" value="2"/>
</dbReference>
<dbReference type="PIRSF" id="PIRSF005763">
    <property type="entry name" value="Txn_reg_ModE"/>
    <property type="match status" value="1"/>
</dbReference>
<dbReference type="SUPFAM" id="SSF50331">
    <property type="entry name" value="MOP-like"/>
    <property type="match status" value="2"/>
</dbReference>
<dbReference type="SUPFAM" id="SSF46785">
    <property type="entry name" value="Winged helix' DNA-binding domain"/>
    <property type="match status" value="1"/>
</dbReference>
<dbReference type="PROSITE" id="PS51866">
    <property type="entry name" value="MOP"/>
    <property type="match status" value="2"/>
</dbReference>
<name>MODE_ECO57</name>